<accession>Q9YGH3</accession>
<keyword id="KW-0165">Cleavage on pair of basic residues</keyword>
<keyword id="KW-1015">Disulfide bond</keyword>
<keyword id="KW-0372">Hormone</keyword>
<keyword id="KW-1185">Reference proteome</keyword>
<keyword id="KW-0964">Secreted</keyword>
<keyword id="KW-0732">Signal</keyword>
<name>SMS1B_CARAU</name>
<protein>
    <recommendedName>
        <fullName>Somatostatin-1B</fullName>
    </recommendedName>
    <component>
        <recommendedName>
            <fullName>[Pro12]-somatostatin-24</fullName>
        </recommendedName>
    </component>
    <component>
        <recommendedName>
            <fullName>[Pro2]-somatostatin-14</fullName>
        </recommendedName>
    </component>
</protein>
<organism>
    <name type="scientific">Carassius auratus</name>
    <name type="common">Goldfish</name>
    <dbReference type="NCBI Taxonomy" id="7957"/>
    <lineage>
        <taxon>Eukaryota</taxon>
        <taxon>Metazoa</taxon>
        <taxon>Chordata</taxon>
        <taxon>Craniata</taxon>
        <taxon>Vertebrata</taxon>
        <taxon>Euteleostomi</taxon>
        <taxon>Actinopterygii</taxon>
        <taxon>Neopterygii</taxon>
        <taxon>Teleostei</taxon>
        <taxon>Ostariophysi</taxon>
        <taxon>Cypriniformes</taxon>
        <taxon>Cyprinidae</taxon>
        <taxon>Cyprininae</taxon>
        <taxon>Carassius</taxon>
    </lineage>
</organism>
<proteinExistence type="inferred from homology"/>
<gene>
    <name type="primary">sst1b</name>
</gene>
<sequence length="111" mass="12558">MQLLSSLVSLLLVLYSVRAAAVLPVEERNPAQSRELSKERKELILKLISGLLDGVDNSVLDGEIAPVPFDAEEPLESRLEERAVYNRLSQLPQRDRKAPCKNFFWKTFTSC</sequence>
<dbReference type="EMBL" id="U72656">
    <property type="protein sequence ID" value="AAD09631.1"/>
    <property type="molecule type" value="mRNA"/>
</dbReference>
<dbReference type="OrthoDB" id="9438385at2759"/>
<dbReference type="Proteomes" id="UP000515129">
    <property type="component" value="Unplaced"/>
</dbReference>
<dbReference type="GO" id="GO:0005615">
    <property type="term" value="C:extracellular space"/>
    <property type="evidence" value="ECO:0007669"/>
    <property type="project" value="TreeGrafter"/>
</dbReference>
<dbReference type="GO" id="GO:0001664">
    <property type="term" value="F:G protein-coupled receptor binding"/>
    <property type="evidence" value="ECO:0007669"/>
    <property type="project" value="TreeGrafter"/>
</dbReference>
<dbReference type="GO" id="GO:0005184">
    <property type="term" value="F:neuropeptide hormone activity"/>
    <property type="evidence" value="ECO:0007669"/>
    <property type="project" value="TreeGrafter"/>
</dbReference>
<dbReference type="GO" id="GO:0007193">
    <property type="term" value="P:adenylate cyclase-inhibiting G protein-coupled receptor signaling pathway"/>
    <property type="evidence" value="ECO:0007669"/>
    <property type="project" value="TreeGrafter"/>
</dbReference>
<dbReference type="GO" id="GO:0030334">
    <property type="term" value="P:regulation of cell migration"/>
    <property type="evidence" value="ECO:0007669"/>
    <property type="project" value="TreeGrafter"/>
</dbReference>
<dbReference type="InterPro" id="IPR004250">
    <property type="entry name" value="Somatostatin"/>
</dbReference>
<dbReference type="InterPro" id="IPR018142">
    <property type="entry name" value="Somatostatin/Cortistatin_C"/>
</dbReference>
<dbReference type="PANTHER" id="PTHR10558:SF1">
    <property type="entry name" value="CORTISTATIN"/>
    <property type="match status" value="1"/>
</dbReference>
<dbReference type="PANTHER" id="PTHR10558">
    <property type="entry name" value="SOMATOSTATIN"/>
    <property type="match status" value="1"/>
</dbReference>
<dbReference type="Pfam" id="PF03002">
    <property type="entry name" value="Somatostatin"/>
    <property type="match status" value="1"/>
</dbReference>
<dbReference type="PIRSF" id="PIRSF001814">
    <property type="entry name" value="Somatostatin"/>
    <property type="match status" value="1"/>
</dbReference>
<feature type="signal peptide" evidence="2">
    <location>
        <begin position="1"/>
        <end position="19"/>
    </location>
</feature>
<feature type="propeptide" id="PRO_0000033118" evidence="2">
    <location>
        <begin position="20"/>
        <end position="87"/>
    </location>
</feature>
<feature type="peptide" id="PRO_0000033119" description="[Pro12]-somatostatin-24" evidence="2">
    <location>
        <begin position="88"/>
        <end position="111"/>
    </location>
</feature>
<feature type="peptide" id="PRO_0000033120" description="[Pro2]-somatostatin-14">
    <location>
        <begin position="98"/>
        <end position="111"/>
    </location>
</feature>
<feature type="disulfide bond" evidence="1">
    <location>
        <begin position="100"/>
        <end position="111"/>
    </location>
</feature>
<comment type="function">
    <text>Somatostatin inhibits the release of somatotropin.</text>
</comment>
<comment type="subcellular location">
    <subcellularLocation>
        <location>Secreted</location>
    </subcellularLocation>
</comment>
<comment type="similarity">
    <text evidence="3">Belongs to the somatostatin family.</text>
</comment>
<reference key="1">
    <citation type="submission" date="1996-09" db="EMBL/GenBank/DDBJ databases">
        <title>Molecular cloning of cDNA encoding [Pro2]somatostatin-14 in goldfish.</title>
        <authorList>
            <person name="Otto C.J."/>
            <person name="Lin X.-W."/>
            <person name="Peter R.E."/>
        </authorList>
    </citation>
    <scope>NUCLEOTIDE SEQUENCE [MRNA]</scope>
    <source>
        <tissue>Brain</tissue>
    </source>
</reference>
<evidence type="ECO:0000250" key="1"/>
<evidence type="ECO:0000255" key="2"/>
<evidence type="ECO:0000305" key="3"/>